<dbReference type="EMBL" id="L42023">
    <property type="protein sequence ID" value="AAC23080.1"/>
    <property type="molecule type" value="Genomic_DNA"/>
</dbReference>
<dbReference type="PIR" id="B64123">
    <property type="entry name" value="B64123"/>
</dbReference>
<dbReference type="RefSeq" id="NP_439582.1">
    <property type="nucleotide sequence ID" value="NC_000907.1"/>
</dbReference>
<dbReference type="SMR" id="P45201"/>
<dbReference type="STRING" id="71421.HI_1433"/>
<dbReference type="EnsemblBacteria" id="AAC23080">
    <property type="protein sequence ID" value="AAC23080"/>
    <property type="gene ID" value="HI_1433"/>
</dbReference>
<dbReference type="KEGG" id="hin:HI_1433"/>
<dbReference type="PATRIC" id="fig|71421.8.peg.1490"/>
<dbReference type="eggNOG" id="COG0136">
    <property type="taxonomic scope" value="Bacteria"/>
</dbReference>
<dbReference type="HOGENOM" id="CLU_049966_2_1_6"/>
<dbReference type="OrthoDB" id="9805684at2"/>
<dbReference type="PhylomeDB" id="P45201"/>
<dbReference type="BioCyc" id="HINF71421:G1GJ1-1456-MONOMER"/>
<dbReference type="Proteomes" id="UP000000579">
    <property type="component" value="Chromosome"/>
</dbReference>
<dbReference type="Gene3D" id="3.30.360.10">
    <property type="entry name" value="Dihydrodipicolinate Reductase, domain 2"/>
    <property type="match status" value="1"/>
</dbReference>
<dbReference type="Gene3D" id="3.40.50.720">
    <property type="entry name" value="NAD(P)-binding Rossmann-like Domain"/>
    <property type="match status" value="1"/>
</dbReference>
<dbReference type="InterPro" id="IPR036291">
    <property type="entry name" value="NAD(P)-bd_dom_sf"/>
</dbReference>
<dbReference type="NCBIfam" id="NF005368">
    <property type="entry name" value="PRK06901.1"/>
    <property type="match status" value="1"/>
</dbReference>
<dbReference type="PANTHER" id="PTHR46278:SF2">
    <property type="entry name" value="ASPARTATE-SEMIALDEHYDE DEHYDROGENASE"/>
    <property type="match status" value="1"/>
</dbReference>
<dbReference type="PANTHER" id="PTHR46278">
    <property type="entry name" value="DEHYDROGENASE, PUTATIVE-RELATED"/>
    <property type="match status" value="1"/>
</dbReference>
<dbReference type="PIRSF" id="PIRSF000148">
    <property type="entry name" value="ASA_dh"/>
    <property type="match status" value="1"/>
</dbReference>
<dbReference type="SUPFAM" id="SSF55347">
    <property type="entry name" value="Glyceraldehyde-3-phosphate dehydrogenase-like, C-terminal domain"/>
    <property type="match status" value="1"/>
</dbReference>
<dbReference type="SUPFAM" id="SSF51735">
    <property type="entry name" value="NAD(P)-binding Rossmann-fold domains"/>
    <property type="match status" value="1"/>
</dbReference>
<feature type="chain" id="PRO_0000141403" description="USG-1 protein homolog">
    <location>
        <begin position="1"/>
        <end position="317"/>
    </location>
</feature>
<gene>
    <name type="primary">usg</name>
    <name type="ordered locus">HI_1433</name>
</gene>
<organism>
    <name type="scientific">Haemophilus influenzae (strain ATCC 51907 / DSM 11121 / KW20 / Rd)</name>
    <dbReference type="NCBI Taxonomy" id="71421"/>
    <lineage>
        <taxon>Bacteria</taxon>
        <taxon>Pseudomonadati</taxon>
        <taxon>Pseudomonadota</taxon>
        <taxon>Gammaproteobacteria</taxon>
        <taxon>Pasteurellales</taxon>
        <taxon>Pasteurellaceae</taxon>
        <taxon>Haemophilus</taxon>
    </lineage>
</organism>
<accession>P45201</accession>
<comment type="similarity">
    <text evidence="1">Belongs to the aspartate-semialdehyde dehydrogenase family.</text>
</comment>
<keyword id="KW-1185">Reference proteome</keyword>
<name>USG_HAEIN</name>
<proteinExistence type="inferred from homology"/>
<reference key="1">
    <citation type="journal article" date="1995" name="Science">
        <title>Whole-genome random sequencing and assembly of Haemophilus influenzae Rd.</title>
        <authorList>
            <person name="Fleischmann R.D."/>
            <person name="Adams M.D."/>
            <person name="White O."/>
            <person name="Clayton R.A."/>
            <person name="Kirkness E.F."/>
            <person name="Kerlavage A.R."/>
            <person name="Bult C.J."/>
            <person name="Tomb J.-F."/>
            <person name="Dougherty B.A."/>
            <person name="Merrick J.M."/>
            <person name="McKenney K."/>
            <person name="Sutton G.G."/>
            <person name="FitzHugh W."/>
            <person name="Fields C.A."/>
            <person name="Gocayne J.D."/>
            <person name="Scott J.D."/>
            <person name="Shirley R."/>
            <person name="Liu L.-I."/>
            <person name="Glodek A."/>
            <person name="Kelley J.M."/>
            <person name="Weidman J.F."/>
            <person name="Phillips C.A."/>
            <person name="Spriggs T."/>
            <person name="Hedblom E."/>
            <person name="Cotton M.D."/>
            <person name="Utterback T.R."/>
            <person name="Hanna M.C."/>
            <person name="Nguyen D.T."/>
            <person name="Saudek D.M."/>
            <person name="Brandon R.C."/>
            <person name="Fine L.D."/>
            <person name="Fritchman J.L."/>
            <person name="Fuhrmann J.L."/>
            <person name="Geoghagen N.S.M."/>
            <person name="Gnehm C.L."/>
            <person name="McDonald L.A."/>
            <person name="Small K.V."/>
            <person name="Fraser C.M."/>
            <person name="Smith H.O."/>
            <person name="Venter J.C."/>
        </authorList>
    </citation>
    <scope>NUCLEOTIDE SEQUENCE [LARGE SCALE GENOMIC DNA]</scope>
    <source>
        <strain>ATCC 51907 / DSM 11121 / KW20 / Rd</strain>
    </source>
</reference>
<protein>
    <recommendedName>
        <fullName>USG-1 protein homolog</fullName>
    </recommendedName>
</protein>
<evidence type="ECO:0000305" key="1"/>
<sequence>MDATLNIAIAAEFELSEKIVERLEQSALEISKVSIVEIIPFEEEQNIRFRNKGVEQLSPNEVEWADFNYVFFAGKLEQVSHIAQAAEQGCIVIDMLGVCSALSDVPVVVPTVNESQLLELRQRNIVSLPDPQVSQLALTLAPILQETNLNQVFVTSLLPASYTDAETVTKLAGQTARLLNGIPLDEEETRLAFDVYPYQTPNLSNQLQRIFPQLDRATFHAIQVPVFYGLAQKVTALSDYDFDYQPQNSELIALEETLITPVLNGEQENGEESVKLHLSQISAVENGVEFWSVADEQRFNLALLSVKLLEGIYQQGY</sequence>